<comment type="function">
    <text evidence="1">Peptide which can recruit, activate and subsequently lyse human neutrophils, thus eliminating the main cellular defense against infection.</text>
</comment>
<comment type="similarity">
    <text evidence="2">Belongs to the phenol-soluble modulin alpha peptides family.</text>
</comment>
<name>PSMA1_STAA9</name>
<feature type="peptide" id="PRO_0000345033" description="Phenol-soluble modulin alpha 1 peptide">
    <location>
        <begin position="1"/>
        <end position="21"/>
    </location>
</feature>
<gene>
    <name type="primary">psmA1</name>
    <name type="ordered locus">SaurJH9_0473.4</name>
</gene>
<dbReference type="EMBL" id="CP000703">
    <property type="status" value="NOT_ANNOTATED_CDS"/>
    <property type="molecule type" value="Genomic_DNA"/>
</dbReference>
<dbReference type="SMR" id="P0C7Y2"/>
<dbReference type="GO" id="GO:0031640">
    <property type="term" value="P:killing of cells of another organism"/>
    <property type="evidence" value="ECO:0007669"/>
    <property type="project" value="UniProtKB-KW"/>
</dbReference>
<dbReference type="InterPro" id="IPR031429">
    <property type="entry name" value="PSM_alpha"/>
</dbReference>
<dbReference type="NCBIfam" id="NF033425">
    <property type="entry name" value="PSM_alpha_1_2"/>
    <property type="match status" value="1"/>
</dbReference>
<dbReference type="Pfam" id="PF17063">
    <property type="entry name" value="PSMalpha"/>
    <property type="match status" value="1"/>
</dbReference>
<proteinExistence type="inferred from homology"/>
<accession>P0C7Y2</accession>
<protein>
    <recommendedName>
        <fullName>Phenol-soluble modulin alpha 1 peptide</fullName>
    </recommendedName>
</protein>
<sequence>MGIIAGIIKVIKSLIEQFTGK</sequence>
<evidence type="ECO:0000250" key="1">
    <source>
        <dbReference type="UniProtKB" id="A9JX05"/>
    </source>
</evidence>
<evidence type="ECO:0000305" key="2"/>
<organism>
    <name type="scientific">Staphylococcus aureus (strain JH9)</name>
    <dbReference type="NCBI Taxonomy" id="359786"/>
    <lineage>
        <taxon>Bacteria</taxon>
        <taxon>Bacillati</taxon>
        <taxon>Bacillota</taxon>
        <taxon>Bacilli</taxon>
        <taxon>Bacillales</taxon>
        <taxon>Staphylococcaceae</taxon>
        <taxon>Staphylococcus</taxon>
    </lineage>
</organism>
<keyword id="KW-0204">Cytolysis</keyword>
<keyword id="KW-0843">Virulence</keyword>
<reference key="1">
    <citation type="submission" date="2007-05" db="EMBL/GenBank/DDBJ databases">
        <title>Complete sequence of chromosome of Staphylococcus aureus subsp. aureus JH9.</title>
        <authorList>
            <consortium name="US DOE Joint Genome Institute"/>
            <person name="Copeland A."/>
            <person name="Lucas S."/>
            <person name="Lapidus A."/>
            <person name="Barry K."/>
            <person name="Detter J.C."/>
            <person name="Glavina del Rio T."/>
            <person name="Hammon N."/>
            <person name="Israni S."/>
            <person name="Pitluck S."/>
            <person name="Chain P."/>
            <person name="Malfatti S."/>
            <person name="Shin M."/>
            <person name="Vergez L."/>
            <person name="Schmutz J."/>
            <person name="Larimer F."/>
            <person name="Land M."/>
            <person name="Hauser L."/>
            <person name="Kyrpides N."/>
            <person name="Kim E."/>
            <person name="Tomasz A."/>
            <person name="Richardson P."/>
        </authorList>
    </citation>
    <scope>NUCLEOTIDE SEQUENCE [LARGE SCALE GENOMIC DNA]</scope>
    <source>
        <strain>JH9</strain>
    </source>
</reference>